<organismHost>
    <name type="scientific">Gallus gallus</name>
    <name type="common">Chicken</name>
    <dbReference type="NCBI Taxonomy" id="9031"/>
</organismHost>
<sequence length="106" mass="11906">MMNLLNTSLEENGSFLTALYVICEFVALYLLGRALQAFVQAADACCLFWYTWVVVPGAKGTAFVYKHTYGKKLNNPELEAVIVNEFPKNGWNNKNPANFQNGKLHT</sequence>
<reference key="1">
    <citation type="journal article" date="1991" name="Virology">
        <title>A polycistronic mRNA specified by the coronavirus infectious bronchitis virus.</title>
        <authorList>
            <person name="Liu D.X."/>
            <person name="Cavanagh D."/>
            <person name="Green P."/>
            <person name="Inglis S.C."/>
        </authorList>
    </citation>
    <scope>NUCLEOTIDE SEQUENCE [GENOMIC RNA]</scope>
</reference>
<name>VEMP_IBVU4</name>
<organism>
    <name type="scientific">Avian infectious bronchitis virus (strain UK/68/84)</name>
    <name type="common">IBV</name>
    <dbReference type="NCBI Taxonomy" id="31630"/>
    <lineage>
        <taxon>Viruses</taxon>
        <taxon>Riboviria</taxon>
        <taxon>Orthornavirae</taxon>
        <taxon>Pisuviricota</taxon>
        <taxon>Pisoniviricetes</taxon>
        <taxon>Nidovirales</taxon>
        <taxon>Cornidovirineae</taxon>
        <taxon>Coronaviridae</taxon>
        <taxon>Orthocoronavirinae</taxon>
        <taxon>Gammacoronavirus</taxon>
        <taxon>Igacovirus</taxon>
        <taxon>Avian coronavirus</taxon>
    </lineage>
</organism>
<accession>P30247</accession>
<proteinExistence type="inferred from homology"/>
<gene>
    <name evidence="1" type="primary">E</name>
    <name type="synonym">sM</name>
    <name type="ORF">3c</name>
</gene>
<feature type="chain" id="PRO_0000106082" description="Envelope small membrane protein">
    <location>
        <begin position="1"/>
        <end position="106"/>
    </location>
</feature>
<feature type="topological domain" description="Virion surface" evidence="1">
    <location>
        <begin position="1"/>
        <end position="11"/>
    </location>
</feature>
<feature type="transmembrane region" description="Helical" evidence="1">
    <location>
        <begin position="12"/>
        <end position="32"/>
    </location>
</feature>
<feature type="topological domain" description="Intravirion" evidence="1">
    <location>
        <begin position="33"/>
        <end position="106"/>
    </location>
</feature>
<comment type="function">
    <text evidence="1">Plays a central role in virus morphogenesis and assembly. Acts as a viroporin and self-assembles in host membranes forming pentameric protein-lipid pores that allow ion transport. Also plays a role in the induction of apoptosis.</text>
</comment>
<comment type="subunit">
    <text evidence="1">Homooligomer. Interacts with the M membrane protein in the budding compartment of the host cell, which is located between endoplasmic reticulum and the Golgi complex. The cytoplasmic tails of both proteins are important for this function. Interacts with Nucleoprotein.</text>
</comment>
<comment type="subcellular location">
    <subcellularLocation>
        <location evidence="1">Host Golgi apparatus membrane</location>
        <topology evidence="1">Single-pass type III membrane protein</topology>
    </subcellularLocation>
    <text evidence="1">The cytoplasmic tail functions as a Golgi complex-targeting signal.</text>
</comment>
<comment type="similarity">
    <text evidence="1">Belongs to the gammacoronaviruses E protein family.</text>
</comment>
<keyword id="KW-0053">Apoptosis</keyword>
<keyword id="KW-1040">Host Golgi apparatus</keyword>
<keyword id="KW-1043">Host membrane</keyword>
<keyword id="KW-0472">Membrane</keyword>
<keyword id="KW-0812">Transmembrane</keyword>
<keyword id="KW-1133">Transmembrane helix</keyword>
<evidence type="ECO:0000255" key="1">
    <source>
        <dbReference type="HAMAP-Rule" id="MF_04206"/>
    </source>
</evidence>
<protein>
    <recommendedName>
        <fullName evidence="1">Envelope small membrane protein</fullName>
        <shortName evidence="1">E protein</shortName>
        <shortName evidence="1">sM protein</shortName>
    </recommendedName>
</protein>
<dbReference type="EMBL" id="X60712">
    <property type="protein sequence ID" value="CAA43124.1"/>
    <property type="molecule type" value="Genomic_RNA"/>
</dbReference>
<dbReference type="PIR" id="C36816">
    <property type="entry name" value="WMIH23"/>
</dbReference>
<dbReference type="SMR" id="P30247"/>
<dbReference type="GO" id="GO:0044178">
    <property type="term" value="C:host cell Golgi membrane"/>
    <property type="evidence" value="ECO:0007669"/>
    <property type="project" value="UniProtKB-SubCell"/>
</dbReference>
<dbReference type="GO" id="GO:0016020">
    <property type="term" value="C:membrane"/>
    <property type="evidence" value="ECO:0007669"/>
    <property type="project" value="UniProtKB-UniRule"/>
</dbReference>
<dbReference type="GO" id="GO:0140975">
    <property type="term" value="P:disruption of cellular anatomical structure in another organism"/>
    <property type="evidence" value="ECO:0007669"/>
    <property type="project" value="UniProtKB-UniRule"/>
</dbReference>
<dbReference type="GO" id="GO:0046760">
    <property type="term" value="P:viral budding from Golgi membrane"/>
    <property type="evidence" value="ECO:0007669"/>
    <property type="project" value="UniProtKB-UniRule"/>
</dbReference>
<dbReference type="HAMAP" id="MF_04206">
    <property type="entry name" value="GAMMA_CORONA_E"/>
    <property type="match status" value="1"/>
</dbReference>
<dbReference type="InterPro" id="IPR003873">
    <property type="entry name" value="E_protein_CoV"/>
</dbReference>
<dbReference type="InterPro" id="IPR005296">
    <property type="entry name" value="IBV_3C"/>
</dbReference>
<dbReference type="Pfam" id="PF03620">
    <property type="entry name" value="IBV_3C"/>
    <property type="match status" value="1"/>
</dbReference>
<dbReference type="PROSITE" id="PS51926">
    <property type="entry name" value="COV_E"/>
    <property type="match status" value="1"/>
</dbReference>